<dbReference type="EMBL" id="CR380958">
    <property type="protein sequence ID" value="CAG62218.1"/>
    <property type="molecule type" value="Genomic_DNA"/>
</dbReference>
<dbReference type="RefSeq" id="XP_449244.1">
    <property type="nucleotide sequence ID" value="XM_449244.1"/>
</dbReference>
<dbReference type="SMR" id="Q6FKK0"/>
<dbReference type="FunCoup" id="Q6FKK0">
    <property type="interactions" value="1256"/>
</dbReference>
<dbReference type="STRING" id="284593.Q6FKK0"/>
<dbReference type="EnsemblFungi" id="CAGL0L10956g-T">
    <property type="protein sequence ID" value="CAGL0L10956g-T-p1"/>
    <property type="gene ID" value="CAGL0L10956g"/>
</dbReference>
<dbReference type="KEGG" id="cgr:2891019"/>
<dbReference type="CGD" id="CAL0134986">
    <property type="gene designation" value="CAGL0L10956g"/>
</dbReference>
<dbReference type="VEuPathDB" id="FungiDB:CAGL0L10956g"/>
<dbReference type="eggNOG" id="KOG2220">
    <property type="taxonomic scope" value="Eukaryota"/>
</dbReference>
<dbReference type="HOGENOM" id="CLU_007181_3_1_1"/>
<dbReference type="InParanoid" id="Q6FKK0"/>
<dbReference type="OMA" id="VSHAEEM"/>
<dbReference type="Proteomes" id="UP000002428">
    <property type="component" value="Chromosome L"/>
</dbReference>
<dbReference type="GO" id="GO:0005768">
    <property type="term" value="C:endosome"/>
    <property type="evidence" value="ECO:0007669"/>
    <property type="project" value="TreeGrafter"/>
</dbReference>
<dbReference type="CDD" id="cd09241">
    <property type="entry name" value="BRO1_ScRim20-like"/>
    <property type="match status" value="1"/>
</dbReference>
<dbReference type="CDD" id="cd08915">
    <property type="entry name" value="V_Alix_like"/>
    <property type="match status" value="1"/>
</dbReference>
<dbReference type="Gene3D" id="1.20.120.560">
    <property type="entry name" value="alix/aip1 in complex with the ypdl late domain"/>
    <property type="match status" value="1"/>
</dbReference>
<dbReference type="Gene3D" id="1.20.140.50">
    <property type="entry name" value="alix/aip1 like domains"/>
    <property type="match status" value="1"/>
</dbReference>
<dbReference type="Gene3D" id="1.25.40.280">
    <property type="entry name" value="alix/aip1 like domains"/>
    <property type="match status" value="1"/>
</dbReference>
<dbReference type="InterPro" id="IPR025304">
    <property type="entry name" value="ALIX_V_dom"/>
</dbReference>
<dbReference type="InterPro" id="IPR004328">
    <property type="entry name" value="BRO1_dom"/>
</dbReference>
<dbReference type="InterPro" id="IPR038499">
    <property type="entry name" value="BRO1_sf"/>
</dbReference>
<dbReference type="PANTHER" id="PTHR23030">
    <property type="entry name" value="PCD6 INTERACTING PROTEIN-RELATED"/>
    <property type="match status" value="1"/>
</dbReference>
<dbReference type="PANTHER" id="PTHR23030:SF39">
    <property type="entry name" value="PROGRAMMED CELL DEATH 6-INTERACTING PROTEIN"/>
    <property type="match status" value="1"/>
</dbReference>
<dbReference type="Pfam" id="PF13949">
    <property type="entry name" value="ALIX_LYPXL_bnd"/>
    <property type="match status" value="1"/>
</dbReference>
<dbReference type="Pfam" id="PF03097">
    <property type="entry name" value="BRO1"/>
    <property type="match status" value="1"/>
</dbReference>
<dbReference type="SMART" id="SM01041">
    <property type="entry name" value="BRO1"/>
    <property type="match status" value="1"/>
</dbReference>
<dbReference type="PROSITE" id="PS51180">
    <property type="entry name" value="BRO1"/>
    <property type="match status" value="1"/>
</dbReference>
<sequence>MTELIDIPFLLTKDCSADLEDRLRFCIETGSLYQTHESFKKDIGEIVNTRQALVNLKFGDSKLLTKYYGYLECLLKKIDPEALAFSWSYTNYTIFEGNVFRDENLLGERRNILFNLGIAYYQSAKHIDDYKNNLPLVCDYLKRSAGCFEILSQRTKERNSEKAIISETMLKALKSMCMGLAQETVWFKSLAAKKDLLTSKLAYKCFEYFQESLNSFQLVGQSTEYIKLILVFVESKMLYFKAVCVYRLAQSIESIADNVGVVIRCLSIAVAALTNSKLESTVVFKNKCLEMLRQLEKDNDFIYLKHVPSHLQFSDFVKLYKLDSMKDLIVLPDLTEIAPSMLDQILFRNLLPIEIMDYGTSYNEKQDIYVLQHFVEPINLLNIQLDEELASFFEIDPQHIVNAHNKTKSFVTRKELDVIGQSFGDLESNAINIETQLANITSYLDLEIKTYEEDKQQYGDVWTIVDARDVTKEFYEKVEKLRQYLEIGRNINLETQELFASIDKSLVTSRTSKAHLTAQYNDPFLNKIEALKKRRERFISEIEKKSYENRIISKLIMYYKETDDIPGTISEREEIFDNIYSKHMKVFAVDMKYIEDCKNENYGLIKEIEEYKSRTNFNNEDRSSDPRTQYIQDVRQSLASLDDVKTQLKKGTAYYQQLIEKVNELVQVIVGFLEARRNDRERLLNEISTAA</sequence>
<keyword id="KW-1185">Reference proteome</keyword>
<comment type="function">
    <text evidence="1">Required for the proteolytic cleavage of the transcription factor RIM101 in response to alkaline ambient pH. May act as a scaffold protein that recruits the calpain-like protease RIM13 via VPS32 to its substrate RIM101 (By similarity).</text>
</comment>
<comment type="similarity">
    <text evidence="3">Belongs to the palA/RIM20 family.</text>
</comment>
<feature type="chain" id="PRO_0000218876" description="pH-response regulator protein palA/RIM20">
    <location>
        <begin position="1"/>
        <end position="691"/>
    </location>
</feature>
<feature type="domain" description="BRO1" evidence="2">
    <location>
        <begin position="3"/>
        <end position="385"/>
    </location>
</feature>
<name>PALA_CANGA</name>
<accession>Q6FKK0</accession>
<reference key="1">
    <citation type="journal article" date="2004" name="Nature">
        <title>Genome evolution in yeasts.</title>
        <authorList>
            <person name="Dujon B."/>
            <person name="Sherman D."/>
            <person name="Fischer G."/>
            <person name="Durrens P."/>
            <person name="Casaregola S."/>
            <person name="Lafontaine I."/>
            <person name="de Montigny J."/>
            <person name="Marck C."/>
            <person name="Neuveglise C."/>
            <person name="Talla E."/>
            <person name="Goffard N."/>
            <person name="Frangeul L."/>
            <person name="Aigle M."/>
            <person name="Anthouard V."/>
            <person name="Babour A."/>
            <person name="Barbe V."/>
            <person name="Barnay S."/>
            <person name="Blanchin S."/>
            <person name="Beckerich J.-M."/>
            <person name="Beyne E."/>
            <person name="Bleykasten C."/>
            <person name="Boisrame A."/>
            <person name="Boyer J."/>
            <person name="Cattolico L."/>
            <person name="Confanioleri F."/>
            <person name="de Daruvar A."/>
            <person name="Despons L."/>
            <person name="Fabre E."/>
            <person name="Fairhead C."/>
            <person name="Ferry-Dumazet H."/>
            <person name="Groppi A."/>
            <person name="Hantraye F."/>
            <person name="Hennequin C."/>
            <person name="Jauniaux N."/>
            <person name="Joyet P."/>
            <person name="Kachouri R."/>
            <person name="Kerrest A."/>
            <person name="Koszul R."/>
            <person name="Lemaire M."/>
            <person name="Lesur I."/>
            <person name="Ma L."/>
            <person name="Muller H."/>
            <person name="Nicaud J.-M."/>
            <person name="Nikolski M."/>
            <person name="Oztas S."/>
            <person name="Ozier-Kalogeropoulos O."/>
            <person name="Pellenz S."/>
            <person name="Potier S."/>
            <person name="Richard G.-F."/>
            <person name="Straub M.-L."/>
            <person name="Suleau A."/>
            <person name="Swennen D."/>
            <person name="Tekaia F."/>
            <person name="Wesolowski-Louvel M."/>
            <person name="Westhof E."/>
            <person name="Wirth B."/>
            <person name="Zeniou-Meyer M."/>
            <person name="Zivanovic Y."/>
            <person name="Bolotin-Fukuhara M."/>
            <person name="Thierry A."/>
            <person name="Bouchier C."/>
            <person name="Caudron B."/>
            <person name="Scarpelli C."/>
            <person name="Gaillardin C."/>
            <person name="Weissenbach J."/>
            <person name="Wincker P."/>
            <person name="Souciet J.-L."/>
        </authorList>
    </citation>
    <scope>NUCLEOTIDE SEQUENCE [LARGE SCALE GENOMIC DNA]</scope>
    <source>
        <strain>ATCC 2001 / BCRC 20586 / JCM 3761 / NBRC 0622 / NRRL Y-65 / CBS 138</strain>
    </source>
</reference>
<proteinExistence type="inferred from homology"/>
<gene>
    <name type="primary">RIM20</name>
    <name type="ordered locus">CAGL0L10956g</name>
</gene>
<organism>
    <name type="scientific">Candida glabrata (strain ATCC 2001 / BCRC 20586 / JCM 3761 / NBRC 0622 / NRRL Y-65 / CBS 138)</name>
    <name type="common">Yeast</name>
    <name type="synonym">Nakaseomyces glabratus</name>
    <dbReference type="NCBI Taxonomy" id="284593"/>
    <lineage>
        <taxon>Eukaryota</taxon>
        <taxon>Fungi</taxon>
        <taxon>Dikarya</taxon>
        <taxon>Ascomycota</taxon>
        <taxon>Saccharomycotina</taxon>
        <taxon>Saccharomycetes</taxon>
        <taxon>Saccharomycetales</taxon>
        <taxon>Saccharomycetaceae</taxon>
        <taxon>Nakaseomyces</taxon>
    </lineage>
</organism>
<evidence type="ECO:0000250" key="1"/>
<evidence type="ECO:0000255" key="2">
    <source>
        <dbReference type="PROSITE-ProRule" id="PRU00526"/>
    </source>
</evidence>
<evidence type="ECO:0000305" key="3"/>
<protein>
    <recommendedName>
        <fullName>pH-response regulator protein palA/RIM20</fullName>
    </recommendedName>
</protein>